<protein>
    <recommendedName>
        <fullName evidence="1">Translation initiation factor IF-1, chloroplastic</fullName>
    </recommendedName>
</protein>
<keyword id="KW-0150">Chloroplast</keyword>
<keyword id="KW-0396">Initiation factor</keyword>
<keyword id="KW-0934">Plastid</keyword>
<keyword id="KW-0648">Protein biosynthesis</keyword>
<keyword id="KW-0694">RNA-binding</keyword>
<keyword id="KW-0699">rRNA-binding</keyword>
<accession>Q9TL25</accession>
<gene>
    <name evidence="1" type="primary">infA</name>
</gene>
<feature type="chain" id="PRO_0000095940" description="Translation initiation factor IF-1, chloroplastic">
    <location>
        <begin position="1"/>
        <end position="77"/>
    </location>
</feature>
<feature type="domain" description="S1-like" evidence="1">
    <location>
        <begin position="1"/>
        <end position="72"/>
    </location>
</feature>
<dbReference type="EMBL" id="AF137379">
    <property type="protein sequence ID" value="AAD54791.1"/>
    <property type="molecule type" value="Genomic_DNA"/>
</dbReference>
<dbReference type="RefSeq" id="NP_050820.1">
    <property type="nucleotide sequence ID" value="NC_000927.1"/>
</dbReference>
<dbReference type="SMR" id="Q9TL25"/>
<dbReference type="GeneID" id="801915"/>
<dbReference type="GO" id="GO:0009507">
    <property type="term" value="C:chloroplast"/>
    <property type="evidence" value="ECO:0007669"/>
    <property type="project" value="UniProtKB-SubCell"/>
</dbReference>
<dbReference type="GO" id="GO:0005829">
    <property type="term" value="C:cytosol"/>
    <property type="evidence" value="ECO:0007669"/>
    <property type="project" value="TreeGrafter"/>
</dbReference>
<dbReference type="GO" id="GO:0043022">
    <property type="term" value="F:ribosome binding"/>
    <property type="evidence" value="ECO:0007669"/>
    <property type="project" value="UniProtKB-UniRule"/>
</dbReference>
<dbReference type="GO" id="GO:0019843">
    <property type="term" value="F:rRNA binding"/>
    <property type="evidence" value="ECO:0007669"/>
    <property type="project" value="UniProtKB-UniRule"/>
</dbReference>
<dbReference type="GO" id="GO:0003743">
    <property type="term" value="F:translation initiation factor activity"/>
    <property type="evidence" value="ECO:0007669"/>
    <property type="project" value="UniProtKB-UniRule"/>
</dbReference>
<dbReference type="CDD" id="cd04451">
    <property type="entry name" value="S1_IF1"/>
    <property type="match status" value="1"/>
</dbReference>
<dbReference type="FunFam" id="2.40.50.140:FF:000002">
    <property type="entry name" value="Translation initiation factor IF-1"/>
    <property type="match status" value="1"/>
</dbReference>
<dbReference type="Gene3D" id="2.40.50.140">
    <property type="entry name" value="Nucleic acid-binding proteins"/>
    <property type="match status" value="1"/>
</dbReference>
<dbReference type="HAMAP" id="MF_00075">
    <property type="entry name" value="IF_1"/>
    <property type="match status" value="1"/>
</dbReference>
<dbReference type="InterPro" id="IPR012340">
    <property type="entry name" value="NA-bd_OB-fold"/>
</dbReference>
<dbReference type="InterPro" id="IPR006196">
    <property type="entry name" value="RNA-binding_domain_S1_IF1"/>
</dbReference>
<dbReference type="InterPro" id="IPR003029">
    <property type="entry name" value="S1_domain"/>
</dbReference>
<dbReference type="InterPro" id="IPR004368">
    <property type="entry name" value="TIF_IF1"/>
</dbReference>
<dbReference type="NCBIfam" id="TIGR00008">
    <property type="entry name" value="infA"/>
    <property type="match status" value="1"/>
</dbReference>
<dbReference type="PANTHER" id="PTHR33370">
    <property type="entry name" value="TRANSLATION INITIATION FACTOR IF-1, CHLOROPLASTIC"/>
    <property type="match status" value="1"/>
</dbReference>
<dbReference type="PANTHER" id="PTHR33370:SF1">
    <property type="entry name" value="TRANSLATION INITIATION FACTOR IF-1, CHLOROPLASTIC"/>
    <property type="match status" value="1"/>
</dbReference>
<dbReference type="Pfam" id="PF01176">
    <property type="entry name" value="eIF-1a"/>
    <property type="match status" value="1"/>
</dbReference>
<dbReference type="SMART" id="SM00316">
    <property type="entry name" value="S1"/>
    <property type="match status" value="1"/>
</dbReference>
<dbReference type="SUPFAM" id="SSF50249">
    <property type="entry name" value="Nucleic acid-binding proteins"/>
    <property type="match status" value="1"/>
</dbReference>
<dbReference type="PROSITE" id="PS50832">
    <property type="entry name" value="S1_IF1_TYPE"/>
    <property type="match status" value="1"/>
</dbReference>
<sequence length="77" mass="8959">MNKQGLFQMEGLVIESLPNAMFRVRLQNGFVILAHISGKIRRNYIRIIVGDRVLCELTPYDLTKGRIVYRQRSTPRP</sequence>
<name>IF1C_NEPOL</name>
<comment type="function">
    <text evidence="1">One of the essential components for the initiation of protein synthesis. Stabilizes the binding of IF-2 and IF-3 on the 30S subunit to which N-formylmethionyl-tRNA(fMet) subsequently binds. Helps modulate mRNA selection, yielding the 30S pre-initiation complex (PIC). Upon addition of the 50S ribosomal subunit IF-1, IF-2 and IF-3 are released leaving the mature 70S translation initiation complex.</text>
</comment>
<comment type="subunit">
    <text evidence="1">Component of the 30S ribosomal translation pre-initiation complex which assembles on the 30S ribosome in the order IF-2 and IF-3, IF-1 and N-formylmethionyl-tRNA(fMet); mRNA recruitment can occur at any time during PIC assembly.</text>
</comment>
<comment type="subcellular location">
    <subcellularLocation>
        <location evidence="1">Plastid</location>
        <location evidence="1">Chloroplast</location>
    </subcellularLocation>
</comment>
<comment type="similarity">
    <text evidence="1">Belongs to the IF-1 family.</text>
</comment>
<geneLocation type="chloroplast"/>
<proteinExistence type="inferred from homology"/>
<reference key="1">
    <citation type="journal article" date="1999" name="Proc. Natl. Acad. Sci. U.S.A.">
        <title>The complete chloroplast DNA sequence of the green alga Nephroselmis olivacea: insights into the architecture of ancestral chloroplast genomes.</title>
        <authorList>
            <person name="Turmel M."/>
            <person name="Otis C."/>
            <person name="Lemieux C."/>
        </authorList>
    </citation>
    <scope>NUCLEOTIDE SEQUENCE [LARGE SCALE GENOMIC DNA]</scope>
    <source>
        <strain>NIES-484 / S-N-5-8</strain>
    </source>
</reference>
<evidence type="ECO:0000255" key="1">
    <source>
        <dbReference type="HAMAP-Rule" id="MF_00075"/>
    </source>
</evidence>
<organism>
    <name type="scientific">Nephroselmis olivacea</name>
    <name type="common">Green alga</name>
    <dbReference type="NCBI Taxonomy" id="31312"/>
    <lineage>
        <taxon>Eukaryota</taxon>
        <taxon>Viridiplantae</taxon>
        <taxon>Chlorophyta</taxon>
        <taxon>Nephroselmidophyceae</taxon>
        <taxon>Nephroselmidales</taxon>
        <taxon>Nephroselmidaceae</taxon>
        <taxon>Nephroselmis</taxon>
    </lineage>
</organism>